<evidence type="ECO:0000250" key="1">
    <source>
        <dbReference type="UniProtKB" id="B2B3C0"/>
    </source>
</evidence>
<evidence type="ECO:0000250" key="2">
    <source>
        <dbReference type="UniProtKB" id="B4XC07"/>
    </source>
</evidence>
<evidence type="ECO:0000250" key="3">
    <source>
        <dbReference type="UniProtKB" id="Q99036"/>
    </source>
</evidence>
<evidence type="ECO:0000255" key="4"/>
<evidence type="ECO:0000255" key="5">
    <source>
        <dbReference type="PROSITE-ProRule" id="PRU00498"/>
    </source>
</evidence>
<evidence type="ECO:0000269" key="6">
    <source>
    </source>
</evidence>
<evidence type="ECO:0000269" key="7">
    <source>
    </source>
</evidence>
<evidence type="ECO:0000269" key="8">
    <source>
    </source>
</evidence>
<evidence type="ECO:0000305" key="9"/>
<gene>
    <name type="primary">manA</name>
    <name type="synonym">man1</name>
    <name type="ORF">AN3358</name>
</gene>
<feature type="signal peptide" evidence="4">
    <location>
        <begin position="1"/>
        <end position="18"/>
    </location>
</feature>
<feature type="chain" id="PRO_0000393706" description="Mannan endo-1,4-beta-mannosidase A">
    <location>
        <begin position="19"/>
        <end position="383"/>
    </location>
</feature>
<feature type="active site" description="Proton donor/acceptor" evidence="3">
    <location>
        <position position="211"/>
    </location>
</feature>
<feature type="active site" description="Nucleophile" evidence="3">
    <location>
        <position position="312"/>
    </location>
</feature>
<feature type="binding site" evidence="2">
    <location>
        <position position="97"/>
    </location>
    <ligand>
        <name>substrate</name>
    </ligand>
</feature>
<feature type="binding site" evidence="2">
    <location>
        <position position="210"/>
    </location>
    <ligand>
        <name>substrate</name>
    </ligand>
</feature>
<feature type="binding site" evidence="3">
    <location>
        <begin position="211"/>
        <end position="213"/>
    </location>
    <ligand>
        <name>substrate</name>
    </ligand>
</feature>
<feature type="binding site" evidence="2">
    <location>
        <position position="279"/>
    </location>
    <ligand>
        <name>substrate</name>
    </ligand>
</feature>
<feature type="binding site" evidence="3">
    <location>
        <position position="283"/>
    </location>
    <ligand>
        <name>substrate</name>
    </ligand>
</feature>
<feature type="binding site" evidence="2">
    <location>
        <position position="342"/>
    </location>
    <ligand>
        <name>substrate</name>
    </ligand>
</feature>
<feature type="glycosylation site" description="N-linked (GlcNAc...) asparagine" evidence="5">
    <location>
        <position position="75"/>
    </location>
</feature>
<feature type="glycosylation site" description="N-linked (GlcNAc...) asparagine" evidence="5">
    <location>
        <position position="199"/>
    </location>
</feature>
<feature type="glycosylation site" description="N-linked (GlcNAc...) asparagine" evidence="5">
    <location>
        <position position="332"/>
    </location>
</feature>
<feature type="disulfide bond" evidence="3">
    <location>
        <begin position="214"/>
        <end position="217"/>
    </location>
</feature>
<feature type="disulfide bond" evidence="3">
    <location>
        <begin position="301"/>
        <end position="308"/>
    </location>
</feature>
<feature type="disulfide bond" evidence="3">
    <location>
        <begin position="320"/>
        <end position="369"/>
    </location>
</feature>
<reference key="1">
    <citation type="journal article" date="2006" name="Proc. Natl. Acad. Sci. U.S.A.">
        <title>Development and application of a suite of polysaccharide-degrading enzymes for analyzing plant cell walls.</title>
        <authorList>
            <person name="Bauer S."/>
            <person name="Vasu P."/>
            <person name="Persson S."/>
            <person name="Mort A.J."/>
            <person name="Somerville C.R."/>
        </authorList>
    </citation>
    <scope>NUCLEOTIDE SEQUENCE [MRNA]</scope>
    <scope>FUNCTION</scope>
    <scope>BIOPHYSICOCHEMICAL PROPERTIES</scope>
    <source>
        <strain>FGSC A4 / ATCC 38163 / CBS 112.46 / NRRL 194 / M139</strain>
    </source>
</reference>
<reference key="2">
    <citation type="journal article" date="2005" name="Nature">
        <title>Sequencing of Aspergillus nidulans and comparative analysis with A. fumigatus and A. oryzae.</title>
        <authorList>
            <person name="Galagan J.E."/>
            <person name="Calvo S.E."/>
            <person name="Cuomo C."/>
            <person name="Ma L.-J."/>
            <person name="Wortman J.R."/>
            <person name="Batzoglou S."/>
            <person name="Lee S.-I."/>
            <person name="Bastuerkmen M."/>
            <person name="Spevak C.C."/>
            <person name="Clutterbuck J."/>
            <person name="Kapitonov V."/>
            <person name="Jurka J."/>
            <person name="Scazzocchio C."/>
            <person name="Farman M.L."/>
            <person name="Butler J."/>
            <person name="Purcell S."/>
            <person name="Harris S."/>
            <person name="Braus G.H."/>
            <person name="Draht O."/>
            <person name="Busch S."/>
            <person name="D'Enfert C."/>
            <person name="Bouchier C."/>
            <person name="Goldman G.H."/>
            <person name="Bell-Pedersen D."/>
            <person name="Griffiths-Jones S."/>
            <person name="Doonan J.H."/>
            <person name="Yu J."/>
            <person name="Vienken K."/>
            <person name="Pain A."/>
            <person name="Freitag M."/>
            <person name="Selker E.U."/>
            <person name="Archer D.B."/>
            <person name="Penalva M.A."/>
            <person name="Oakley B.R."/>
            <person name="Momany M."/>
            <person name="Tanaka T."/>
            <person name="Kumagai T."/>
            <person name="Asai K."/>
            <person name="Machida M."/>
            <person name="Nierman W.C."/>
            <person name="Denning D.W."/>
            <person name="Caddick M.X."/>
            <person name="Hynes M."/>
            <person name="Paoletti M."/>
            <person name="Fischer R."/>
            <person name="Miller B.L."/>
            <person name="Dyer P.S."/>
            <person name="Sachs M.S."/>
            <person name="Osmani S.A."/>
            <person name="Birren B.W."/>
        </authorList>
    </citation>
    <scope>NUCLEOTIDE SEQUENCE [LARGE SCALE GENOMIC DNA]</scope>
    <source>
        <strain>FGSC A4 / ATCC 38163 / CBS 112.46 / NRRL 194 / M139</strain>
    </source>
</reference>
<reference key="3">
    <citation type="journal article" date="2009" name="Fungal Genet. Biol.">
        <title>The 2008 update of the Aspergillus nidulans genome annotation: a community effort.</title>
        <authorList>
            <person name="Wortman J.R."/>
            <person name="Gilsenan J.M."/>
            <person name="Joardar V."/>
            <person name="Deegan J."/>
            <person name="Clutterbuck J."/>
            <person name="Andersen M.R."/>
            <person name="Archer D."/>
            <person name="Bencina M."/>
            <person name="Braus G."/>
            <person name="Coutinho P."/>
            <person name="von Dohren H."/>
            <person name="Doonan J."/>
            <person name="Driessen A.J."/>
            <person name="Durek P."/>
            <person name="Espeso E."/>
            <person name="Fekete E."/>
            <person name="Flipphi M."/>
            <person name="Estrada C.G."/>
            <person name="Geysens S."/>
            <person name="Goldman G."/>
            <person name="de Groot P.W."/>
            <person name="Hansen K."/>
            <person name="Harris S.D."/>
            <person name="Heinekamp T."/>
            <person name="Helmstaedt K."/>
            <person name="Henrissat B."/>
            <person name="Hofmann G."/>
            <person name="Homan T."/>
            <person name="Horio T."/>
            <person name="Horiuchi H."/>
            <person name="James S."/>
            <person name="Jones M."/>
            <person name="Karaffa L."/>
            <person name="Karanyi Z."/>
            <person name="Kato M."/>
            <person name="Keller N."/>
            <person name="Kelly D.E."/>
            <person name="Kiel J.A."/>
            <person name="Kim J.M."/>
            <person name="van der Klei I.J."/>
            <person name="Klis F.M."/>
            <person name="Kovalchuk A."/>
            <person name="Krasevec N."/>
            <person name="Kubicek C.P."/>
            <person name="Liu B."/>
            <person name="Maccabe A."/>
            <person name="Meyer V."/>
            <person name="Mirabito P."/>
            <person name="Miskei M."/>
            <person name="Mos M."/>
            <person name="Mullins J."/>
            <person name="Nelson D.R."/>
            <person name="Nielsen J."/>
            <person name="Oakley B.R."/>
            <person name="Osmani S.A."/>
            <person name="Pakula T."/>
            <person name="Paszewski A."/>
            <person name="Paulsen I."/>
            <person name="Pilsyk S."/>
            <person name="Pocsi I."/>
            <person name="Punt P.J."/>
            <person name="Ram A.F."/>
            <person name="Ren Q."/>
            <person name="Robellet X."/>
            <person name="Robson G."/>
            <person name="Seiboth B."/>
            <person name="van Solingen P."/>
            <person name="Specht T."/>
            <person name="Sun J."/>
            <person name="Taheri-Talesh N."/>
            <person name="Takeshita N."/>
            <person name="Ussery D."/>
            <person name="vanKuyk P.A."/>
            <person name="Visser H."/>
            <person name="van de Vondervoort P.J."/>
            <person name="de Vries R.P."/>
            <person name="Walton J."/>
            <person name="Xiang X."/>
            <person name="Xiong Y."/>
            <person name="Zeng A.P."/>
            <person name="Brandt B.W."/>
            <person name="Cornell M.J."/>
            <person name="van den Hondel C.A."/>
            <person name="Visser J."/>
            <person name="Oliver S.G."/>
            <person name="Turner G."/>
        </authorList>
    </citation>
    <scope>GENOME REANNOTATION</scope>
    <source>
        <strain>FGSC A4 / ATCC 38163 / CBS 112.46 / NRRL 194 / M139</strain>
    </source>
</reference>
<reference key="4">
    <citation type="journal article" date="2011" name="Biochim. Biophys. Acta">
        <title>Recombinant production and characterisation of two related GH5 endo-beta-1,4-mannanases from Aspergillus nidulans FGSC A4 showing distinctly different transglycosylation capacity.</title>
        <authorList>
            <person name="Dilokpimol A."/>
            <person name="Nakai H."/>
            <person name="Gotfredsen C.H."/>
            <person name="Baumann M.J."/>
            <person name="Nakai N."/>
            <person name="Abou Hachem M."/>
            <person name="Svensson B."/>
        </authorList>
    </citation>
    <scope>FUNCTION</scope>
    <scope>BIOPHYSICOCHEMICAL PROPERTIES</scope>
</reference>
<reference key="5">
    <citation type="journal article" date="2014" name="Appl. Microbiol. Biotechnol.">
        <title>An Aspergillus nidulans beta-mannanase with high transglycosylation capacity revealed through comparative studies within glycosidase family 5.</title>
        <authorList>
            <person name="Rosengren A."/>
            <person name="Reddy S.K."/>
            <person name="Sjoeberg J.S."/>
            <person name="Aurelius O."/>
            <person name="Logan D.T."/>
            <person name="Kolenova K."/>
            <person name="Staalbrand H."/>
        </authorList>
    </citation>
    <scope>FUNCTION</scope>
    <scope>BIOPHYSICOCHEMICAL PROPERTIES</scope>
</reference>
<keyword id="KW-0119">Carbohydrate metabolism</keyword>
<keyword id="KW-1015">Disulfide bond</keyword>
<keyword id="KW-0325">Glycoprotein</keyword>
<keyword id="KW-0326">Glycosidase</keyword>
<keyword id="KW-0378">Hydrolase</keyword>
<keyword id="KW-1185">Reference proteome</keyword>
<keyword id="KW-0964">Secreted</keyword>
<keyword id="KW-0732">Signal</keyword>
<proteinExistence type="evidence at protein level"/>
<accession>Q5B7X2</accession>
<accession>C8VHS1</accession>
<accession>Q1HFT7</accession>
<protein>
    <recommendedName>
        <fullName>Mannan endo-1,4-beta-mannosidase A</fullName>
        <ecNumber evidence="6">3.2.1.78</ecNumber>
    </recommendedName>
    <alternativeName>
        <fullName>Endo-beta-1,4-mannanase A</fullName>
    </alternativeName>
</protein>
<dbReference type="EC" id="3.2.1.78" evidence="6"/>
<dbReference type="EMBL" id="DQ490487">
    <property type="protein sequence ID" value="ABF50863.1"/>
    <property type="molecule type" value="mRNA"/>
</dbReference>
<dbReference type="EMBL" id="AACD01000055">
    <property type="protein sequence ID" value="EAA63326.1"/>
    <property type="molecule type" value="Genomic_DNA"/>
</dbReference>
<dbReference type="EMBL" id="BN001306">
    <property type="protein sequence ID" value="CBF82875.1"/>
    <property type="molecule type" value="Genomic_DNA"/>
</dbReference>
<dbReference type="RefSeq" id="XP_660962.1">
    <property type="nucleotide sequence ID" value="XM_655870.1"/>
</dbReference>
<dbReference type="SMR" id="Q5B7X2"/>
<dbReference type="STRING" id="227321.Q5B7X2"/>
<dbReference type="CAZy" id="GH5">
    <property type="family name" value="Glycoside Hydrolase Family 5"/>
</dbReference>
<dbReference type="GlyCosmos" id="Q5B7X2">
    <property type="glycosylation" value="3 sites, No reported glycans"/>
</dbReference>
<dbReference type="EnsemblFungi" id="CBF82875">
    <property type="protein sequence ID" value="CBF82875"/>
    <property type="gene ID" value="ANIA_03358"/>
</dbReference>
<dbReference type="KEGG" id="ani:ANIA_03358"/>
<dbReference type="eggNOG" id="ENOG502QS4Q">
    <property type="taxonomic scope" value="Eukaryota"/>
</dbReference>
<dbReference type="HOGENOM" id="CLU_031603_4_1_1"/>
<dbReference type="InParanoid" id="Q5B7X2"/>
<dbReference type="OMA" id="YNWIEST"/>
<dbReference type="OrthoDB" id="406631at2759"/>
<dbReference type="BRENDA" id="3.2.1.78">
    <property type="organism ID" value="517"/>
</dbReference>
<dbReference type="Proteomes" id="UP000000560">
    <property type="component" value="Chromosome VI"/>
</dbReference>
<dbReference type="GO" id="GO:0005576">
    <property type="term" value="C:extracellular region"/>
    <property type="evidence" value="ECO:0007669"/>
    <property type="project" value="UniProtKB-SubCell"/>
</dbReference>
<dbReference type="GO" id="GO:0016985">
    <property type="term" value="F:mannan endo-1,4-beta-mannosidase activity"/>
    <property type="evidence" value="ECO:0000314"/>
    <property type="project" value="UniProtKB"/>
</dbReference>
<dbReference type="GO" id="GO:0046355">
    <property type="term" value="P:mannan catabolic process"/>
    <property type="evidence" value="ECO:0000314"/>
    <property type="project" value="UniProtKB"/>
</dbReference>
<dbReference type="FunFam" id="3.20.20.80:FF:000076">
    <property type="entry name" value="Mannan endo-1,4-beta-mannosidase A"/>
    <property type="match status" value="1"/>
</dbReference>
<dbReference type="Gene3D" id="3.20.20.80">
    <property type="entry name" value="Glycosidases"/>
    <property type="match status" value="1"/>
</dbReference>
<dbReference type="InterPro" id="IPR001547">
    <property type="entry name" value="Glyco_hydro_5"/>
</dbReference>
<dbReference type="InterPro" id="IPR017853">
    <property type="entry name" value="Glycoside_hydrolase_SF"/>
</dbReference>
<dbReference type="InterPro" id="IPR045053">
    <property type="entry name" value="MAN-like"/>
</dbReference>
<dbReference type="PANTHER" id="PTHR31451">
    <property type="match status" value="1"/>
</dbReference>
<dbReference type="PANTHER" id="PTHR31451:SF39">
    <property type="entry name" value="MANNAN ENDO-1,4-BETA-MANNOSIDASE 1"/>
    <property type="match status" value="1"/>
</dbReference>
<dbReference type="Pfam" id="PF00150">
    <property type="entry name" value="Cellulase"/>
    <property type="match status" value="1"/>
</dbReference>
<dbReference type="SUPFAM" id="SSF51445">
    <property type="entry name" value="(Trans)glycosidases"/>
    <property type="match status" value="1"/>
</dbReference>
<comment type="function">
    <text evidence="6 7 8">Endo-1,4-mannanase that catalyzes the random hydrolysis of (1-&gt;4)-beta-D-mannosidic linkages in mannans and heteromannans. It is a crucial enzyme for depolymerization of seed galactomannans and wood galactoglucomannans. Active against locust bean gum and gum guar (PubMed:16844780). Also has transglycosylation activity (PubMed:21867780, PubMed:24950755).</text>
</comment>
<comment type="catalytic activity">
    <reaction evidence="6">
        <text>Random hydrolysis of (1-&gt;4)-beta-D-mannosidic linkages in mannans, galactomannans and glucomannans.</text>
        <dbReference type="EC" id="3.2.1.78"/>
    </reaction>
</comment>
<comment type="biophysicochemical properties">
    <kinetics>
        <KM evidence="8">1.4 mg/ml for locust bean gum mannan</KM>
        <KM evidence="7">2.9 mM for mannopentaose</KM>
        <KM evidence="7">1.8 mM for mannohexaose</KM>
    </kinetics>
    <phDependence>
        <text evidence="6 7">Optimum pH is 5.5.</text>
    </phDependence>
    <temperatureDependence>
        <text evidence="6">Optimum temperature is 52 degrees Celsius.</text>
    </temperatureDependence>
</comment>
<comment type="subunit">
    <text evidence="1">Monomer.</text>
</comment>
<comment type="subcellular location">
    <subcellularLocation>
        <location evidence="3">Secreted</location>
    </subcellularLocation>
</comment>
<comment type="similarity">
    <text evidence="9">Belongs to the glycosyl hydrolase 5 (cellulase A) family.</text>
</comment>
<name>MANA_EMENI</name>
<sequence>MKFSQALLSLASLALAAALPHASTPVYTPSTTPSPTPTPSASGSFATTSGIQFVIDGEAGYFPGSNAYWIGFLKNNSDVDLVFDHMASSGLRILRVWGFNDVNTAPTDGSVYFQLHQDGKSTINTGKDGLQRLDYVVHSAEKHGIKLIINFVNYWDDYGGMNAYMRAYGGGDKADWFENEGIQAAYQAYVEAVVKRYINSTAVFAWELANEPRCTGCEPSVLHNWIEKTSAFIKGLDEKHLVCIGDGSDGSYPFQYTEGSDFAAALTIDTIDFGTFHLYPDSWGTNNDWGKLWITSHAAACAAAGKPCLFEEYGVTSNHCAIEKQWQNAALNATGIAADLYWQYGDTLSSGPSPDDGNTFYYGSEEFECLVTNHVETIERSAK</sequence>
<organism>
    <name type="scientific">Emericella nidulans (strain FGSC A4 / ATCC 38163 / CBS 112.46 / NRRL 194 / M139)</name>
    <name type="common">Aspergillus nidulans</name>
    <dbReference type="NCBI Taxonomy" id="227321"/>
    <lineage>
        <taxon>Eukaryota</taxon>
        <taxon>Fungi</taxon>
        <taxon>Dikarya</taxon>
        <taxon>Ascomycota</taxon>
        <taxon>Pezizomycotina</taxon>
        <taxon>Eurotiomycetes</taxon>
        <taxon>Eurotiomycetidae</taxon>
        <taxon>Eurotiales</taxon>
        <taxon>Aspergillaceae</taxon>
        <taxon>Aspergillus</taxon>
        <taxon>Aspergillus subgen. Nidulantes</taxon>
    </lineage>
</organism>